<sequence>MTVRNIASICNMGTNASALEKDIGPEQFPINEHYFGLVNFGNTCYCNSVLQALYFCRPFRENVLAYKAQQKKKENLLTCLADLFHSIATQKKKVGVIPPKKFISRLRKENDLFDNYMQQDAHEFLNYLLNTIADILQEEKKQEKQNGKLKNGNMNEPAENNKPELTWVHEIFQGTLTNETRCLNCETVSSKDEDFLDLSVDVEQNTSITHCLRDFSNTETLCSEQKYYCETCCSKQEAQKRMRVKKLPMILALHLKRFKYMEQLHRYTKLSYRVVFPLELRLFNTSSDAVNLDRMYDLVAVVVHCGSGPNRGHYITIVKSHGFWLLFDDDIVEKIDAQAIEEFYGLTSDISKNSESGYILFYQSRE</sequence>
<protein>
    <recommendedName>
        <fullName>Ubiquitin carboxyl-terminal hydrolase 46</fullName>
        <ecNumber evidence="4 5 8">3.4.19.12</ecNumber>
    </recommendedName>
    <alternativeName>
        <fullName>Deubiquitinating enzyme 46</fullName>
    </alternativeName>
    <alternativeName>
        <fullName>Ubiquitin thioesterase 46</fullName>
    </alternativeName>
    <alternativeName>
        <fullName>Ubiquitin-specific-processing protease 46</fullName>
    </alternativeName>
</protein>
<gene>
    <name type="primary">USP46</name>
</gene>
<name>UBP46_HUMAN</name>
<accession>P62068</accession>
<accession>B7Z3Y7</accession>
<accession>B7Z675</accession>
<accession>B7Z7S3</accession>
<accession>G8ACC7</accession>
<accession>Q80V95</accession>
<accession>Q9H7U4</accession>
<accession>Q9H9T8</accession>
<organism>
    <name type="scientific">Homo sapiens</name>
    <name type="common">Human</name>
    <dbReference type="NCBI Taxonomy" id="9606"/>
    <lineage>
        <taxon>Eukaryota</taxon>
        <taxon>Metazoa</taxon>
        <taxon>Chordata</taxon>
        <taxon>Craniata</taxon>
        <taxon>Vertebrata</taxon>
        <taxon>Euteleostomi</taxon>
        <taxon>Mammalia</taxon>
        <taxon>Eutheria</taxon>
        <taxon>Euarchontoglires</taxon>
        <taxon>Primates</taxon>
        <taxon>Haplorrhini</taxon>
        <taxon>Catarrhini</taxon>
        <taxon>Hominidae</taxon>
        <taxon>Homo</taxon>
    </lineage>
</organism>
<evidence type="ECO:0000250" key="1">
    <source>
        <dbReference type="UniProtKB" id="P62069"/>
    </source>
</evidence>
<evidence type="ECO:0000255" key="2">
    <source>
        <dbReference type="PROSITE-ProRule" id="PRU10092"/>
    </source>
</evidence>
<evidence type="ECO:0000255" key="3">
    <source>
        <dbReference type="PROSITE-ProRule" id="PRU10093"/>
    </source>
</evidence>
<evidence type="ECO:0000269" key="4">
    <source>
    </source>
</evidence>
<evidence type="ECO:0000269" key="5">
    <source>
    </source>
</evidence>
<evidence type="ECO:0000269" key="6">
    <source>
    </source>
</evidence>
<evidence type="ECO:0000269" key="7">
    <source>
    </source>
</evidence>
<evidence type="ECO:0000269" key="8">
    <source>
    </source>
</evidence>
<evidence type="ECO:0000269" key="9">
    <source>
    </source>
</evidence>
<evidence type="ECO:0000269" key="10">
    <source>
    </source>
</evidence>
<evidence type="ECO:0000303" key="11">
    <source>
    </source>
</evidence>
<evidence type="ECO:0000305" key="12"/>
<evidence type="ECO:0000305" key="13">
    <source>
    </source>
</evidence>
<evidence type="ECO:0007744" key="14">
    <source>
        <dbReference type="PDB" id="5CVM"/>
    </source>
</evidence>
<evidence type="ECO:0007744" key="15">
    <source>
        <dbReference type="PDB" id="5CVN"/>
    </source>
</evidence>
<evidence type="ECO:0007744" key="16">
    <source>
        <dbReference type="PDB" id="5CVO"/>
    </source>
</evidence>
<evidence type="ECO:0007744" key="17">
    <source>
        <dbReference type="PDB" id="5L8H"/>
    </source>
</evidence>
<evidence type="ECO:0007829" key="18">
    <source>
        <dbReference type="PDB" id="5L8H"/>
    </source>
</evidence>
<evidence type="ECO:0007829" key="19">
    <source>
        <dbReference type="PDB" id="6JLQ"/>
    </source>
</evidence>
<feature type="chain" id="PRO_0000080674" description="Ubiquitin carboxyl-terminal hydrolase 46">
    <location>
        <begin position="1"/>
        <end position="366"/>
    </location>
</feature>
<feature type="domain" description="USP">
    <location>
        <begin position="35"/>
        <end position="365"/>
    </location>
</feature>
<feature type="active site" description="Nucleophile" evidence="2 3 8 13">
    <location>
        <position position="44"/>
    </location>
</feature>
<feature type="active site" description="Proton acceptor" evidence="2 3">
    <location>
        <position position="313"/>
    </location>
</feature>
<feature type="binding site" evidence="14 15 16 17">
    <location>
        <position position="182"/>
    </location>
    <ligand>
        <name>Zn(2+)</name>
        <dbReference type="ChEBI" id="CHEBI:29105"/>
    </ligand>
</feature>
<feature type="binding site" evidence="14 15 16 17">
    <location>
        <position position="185"/>
    </location>
    <ligand>
        <name>Zn(2+)</name>
        <dbReference type="ChEBI" id="CHEBI:29105"/>
    </ligand>
</feature>
<feature type="binding site" evidence="14 15 16 17">
    <location>
        <position position="229"/>
    </location>
    <ligand>
        <name>Zn(2+)</name>
        <dbReference type="ChEBI" id="CHEBI:29105"/>
    </ligand>
</feature>
<feature type="binding site" evidence="14 15 16 17">
    <location>
        <position position="232"/>
    </location>
    <ligand>
        <name>Zn(2+)</name>
        <dbReference type="ChEBI" id="CHEBI:29105"/>
    </ligand>
</feature>
<feature type="splice variant" id="VSP_037618" description="In isoform 2." evidence="11">
    <location>
        <begin position="1"/>
        <end position="116"/>
    </location>
</feature>
<feature type="splice variant" id="VSP_037619" description="In isoform 3." evidence="11">
    <original>MTVRNIASICNM</original>
    <variation>MNCFQ</variation>
    <location>
        <begin position="1"/>
        <end position="12"/>
    </location>
</feature>
<feature type="splice variant" id="VSP_037620" description="In isoform 4." evidence="11">
    <location>
        <begin position="40"/>
        <end position="51"/>
    </location>
</feature>
<feature type="splice variant" id="VSP_037621" description="In isoform 2." evidence="11">
    <original>KIDAQAIEEFYGLTSDISKNSESGYILFYQSRE</original>
    <variation>VGLQIILQ</variation>
    <location>
        <begin position="334"/>
        <end position="366"/>
    </location>
</feature>
<feature type="sequence variant" id="VAR_051540" description="In dbSNP:rs17475800.">
    <original>A</original>
    <variation>V</variation>
    <location>
        <position position="81"/>
    </location>
</feature>
<feature type="mutagenesis site" description="Abolishes enzyme activity." evidence="7 8">
    <original>C</original>
    <variation>S</variation>
    <location>
        <position position="44"/>
    </location>
</feature>
<feature type="sequence conflict" description="In Ref. 2; BAH13161." evidence="12" ref="2">
    <original>T</original>
    <variation>A</variation>
    <location>
        <position position="177"/>
    </location>
</feature>
<feature type="sequence conflict" description="In Ref. 2; BAB14133." evidence="12" ref="2">
    <original>I</original>
    <variation>V</variation>
    <location>
        <position position="250"/>
    </location>
</feature>
<feature type="sequence conflict" description="In Ref. 2; BAB14133." evidence="12" ref="2">
    <original>H</original>
    <variation>R</variation>
    <location>
        <position position="265"/>
    </location>
</feature>
<feature type="strand" evidence="18">
    <location>
        <begin position="34"/>
        <end position="37"/>
    </location>
</feature>
<feature type="strand" evidence="18">
    <location>
        <begin position="40"/>
        <end position="42"/>
    </location>
</feature>
<feature type="helix" evidence="18">
    <location>
        <begin position="44"/>
        <end position="54"/>
    </location>
</feature>
<feature type="helix" evidence="18">
    <location>
        <begin position="57"/>
        <end position="69"/>
    </location>
</feature>
<feature type="helix" evidence="18">
    <location>
        <begin position="76"/>
        <end position="89"/>
    </location>
</feature>
<feature type="strand" evidence="18">
    <location>
        <begin position="91"/>
        <end position="97"/>
    </location>
</feature>
<feature type="helix" evidence="18">
    <location>
        <begin position="100"/>
        <end position="109"/>
    </location>
</feature>
<feature type="helix" evidence="18">
    <location>
        <begin position="111"/>
        <end position="113"/>
    </location>
</feature>
<feature type="strand" evidence="18">
    <location>
        <begin position="114"/>
        <end position="117"/>
    </location>
</feature>
<feature type="helix" evidence="18">
    <location>
        <begin position="121"/>
        <end position="140"/>
    </location>
</feature>
<feature type="helix" evidence="18">
    <location>
        <begin position="167"/>
        <end position="172"/>
    </location>
</feature>
<feature type="strand" evidence="18">
    <location>
        <begin position="174"/>
        <end position="182"/>
    </location>
</feature>
<feature type="turn" evidence="18">
    <location>
        <begin position="183"/>
        <end position="185"/>
    </location>
</feature>
<feature type="strand" evidence="18">
    <location>
        <begin position="188"/>
        <end position="200"/>
    </location>
</feature>
<feature type="strand" evidence="18">
    <location>
        <begin position="204"/>
        <end position="207"/>
    </location>
</feature>
<feature type="helix" evidence="18">
    <location>
        <begin position="208"/>
        <end position="215"/>
    </location>
</feature>
<feature type="strand" evidence="18">
    <location>
        <begin position="219"/>
        <end position="221"/>
    </location>
</feature>
<feature type="helix" evidence="18">
    <location>
        <begin position="223"/>
        <end position="225"/>
    </location>
</feature>
<feature type="strand" evidence="18">
    <location>
        <begin position="227"/>
        <end position="229"/>
    </location>
</feature>
<feature type="turn" evidence="18">
    <location>
        <begin position="230"/>
        <end position="233"/>
    </location>
</feature>
<feature type="strand" evidence="18">
    <location>
        <begin position="234"/>
        <end position="236"/>
    </location>
</feature>
<feature type="strand" evidence="18">
    <location>
        <begin position="238"/>
        <end position="246"/>
    </location>
</feature>
<feature type="strand" evidence="18">
    <location>
        <begin position="249"/>
        <end position="255"/>
    </location>
</feature>
<feature type="strand" evidence="18">
    <location>
        <begin position="258"/>
        <end position="261"/>
    </location>
</feature>
<feature type="turn" evidence="18">
    <location>
        <begin position="262"/>
        <end position="265"/>
    </location>
</feature>
<feature type="strand" evidence="18">
    <location>
        <begin position="266"/>
        <end position="269"/>
    </location>
</feature>
<feature type="strand" evidence="18">
    <location>
        <begin position="278"/>
        <end position="283"/>
    </location>
</feature>
<feature type="strand" evidence="19">
    <location>
        <begin position="289"/>
        <end position="291"/>
    </location>
</feature>
<feature type="strand" evidence="18">
    <location>
        <begin position="293"/>
        <end position="311"/>
    </location>
</feature>
<feature type="strand" evidence="18">
    <location>
        <begin position="313"/>
        <end position="320"/>
    </location>
</feature>
<feature type="strand" evidence="18">
    <location>
        <begin position="323"/>
        <end position="328"/>
    </location>
</feature>
<feature type="strand" evidence="18">
    <location>
        <begin position="331"/>
        <end position="335"/>
    </location>
</feature>
<feature type="helix" evidence="18">
    <location>
        <begin position="337"/>
        <end position="344"/>
    </location>
</feature>
<feature type="strand" evidence="18">
    <location>
        <begin position="346"/>
        <end position="349"/>
    </location>
</feature>
<feature type="strand" evidence="18">
    <location>
        <begin position="354"/>
        <end position="364"/>
    </location>
</feature>
<proteinExistence type="evidence at protein level"/>
<keyword id="KW-0002">3D-structure</keyword>
<keyword id="KW-0025">Alternative splicing</keyword>
<keyword id="KW-0085">Behavior</keyword>
<keyword id="KW-0963">Cytoplasm</keyword>
<keyword id="KW-0378">Hydrolase</keyword>
<keyword id="KW-0479">Metal-binding</keyword>
<keyword id="KW-0645">Protease</keyword>
<keyword id="KW-1267">Proteomics identification</keyword>
<keyword id="KW-1185">Reference proteome</keyword>
<keyword id="KW-0788">Thiol protease</keyword>
<keyword id="KW-0833">Ubl conjugation pathway</keyword>
<keyword id="KW-0862">Zinc</keyword>
<comment type="function">
    <text evidence="1 5 8">Deubiquitinating enzyme that plays a role in behavior, possibly by regulating GABA action. May act by mediating the deubiquitination of GAD1/GAD67 (By similarity). Has almost no deubiquitinating activity by itself and requires the interaction with WDR48 to have a high activity (PubMed:19075014, PubMed:26388029). Not involved in deubiquitination of monoubiquitinated FANCD2 (PubMed:19075014).</text>
</comment>
<comment type="catalytic activity">
    <reaction evidence="4 5 8">
        <text>Thiol-dependent hydrolysis of ester, thioester, amide, peptide and isopeptide bonds formed by the C-terminal Gly of ubiquitin (a 76-residue protein attached to proteins as an intracellular targeting signal).</text>
        <dbReference type="EC" id="3.4.19.12"/>
    </reaction>
</comment>
<comment type="activity regulation">
    <text evidence="8">Activated by interaction with WDR48.</text>
</comment>
<comment type="subunit">
    <text evidence="5 6 8 10">Interacts with WDR48 (PubMed:19075014, PubMed:26388029). Interacts with WDR20 (PubMed:20147737). Interacts with DMWD (PubMed:33844468). Component of the USP46/WDR20/WDR48 deubiquitinating complex.</text>
</comment>
<comment type="interaction">
    <interactant intactId="EBI-2512753">
        <id>P62068</id>
    </interactant>
    <interactant intactId="EBI-930964">
        <id>P54253</id>
        <label>ATXN1</label>
    </interactant>
    <organismsDiffer>false</organismsDiffer>
    <experiments>6</experiments>
</comment>
<comment type="interaction">
    <interactant intactId="EBI-2512753">
        <id>P62068</id>
    </interactant>
    <interactant intactId="EBI-2511486">
        <id>Q8TBZ3</id>
        <label>WDR20</label>
    </interactant>
    <organismsDiffer>false</organismsDiffer>
    <experiments>8</experiments>
</comment>
<comment type="subcellular location">
    <subcellularLocation>
        <location evidence="9">Cytoplasm</location>
    </subcellularLocation>
    <text evidence="9">USP46/WDR48/WDR20 complex is predominantly cytoplasmic.</text>
</comment>
<comment type="alternative products">
    <event type="alternative splicing"/>
    <isoform>
        <id>P62068-1</id>
        <name>1</name>
        <sequence type="displayed"/>
    </isoform>
    <isoform>
        <id>P62068-2</id>
        <name>2</name>
        <sequence type="described" ref="VSP_037618 VSP_037621"/>
    </isoform>
    <isoform>
        <id>P62068-3</id>
        <name>3</name>
        <sequence type="described" ref="VSP_037619"/>
    </isoform>
    <isoform>
        <id>P62068-4</id>
        <name>4</name>
        <sequence type="described" ref="VSP_037620"/>
    </isoform>
</comment>
<comment type="tissue specificity">
    <text evidence="4">Broadly expressed.</text>
</comment>
<comment type="similarity">
    <text evidence="12">Belongs to the peptidase C19 family. USP12/USP46 subfamily.</text>
</comment>
<reference key="1">
    <citation type="journal article" date="2011" name="PLoS ONE">
        <title>Lysine 92 amino acid residue of USP46, a gene associated with 'behavioral despair' in mice, influences the deubiquitinating enzyme activity.</title>
        <authorList>
            <person name="Zhang W."/>
            <person name="Tian Q.B."/>
            <person name="Li Q.K."/>
            <person name="Wang J.M."/>
            <person name="Wang C.N."/>
            <person name="Liu T."/>
            <person name="Liu D.W."/>
            <person name="Wang M.W."/>
        </authorList>
    </citation>
    <scope>NUCLEOTIDE SEQUENCE [MRNA] (ISOFORM 1)</scope>
    <scope>CATALYTIC ACTIVITY</scope>
    <scope>ACTIVE SITE</scope>
    <scope>MUTAGENESIS OF CYS-44</scope>
</reference>
<reference key="2">
    <citation type="journal article" date="2004" name="Nat. Genet.">
        <title>Complete sequencing and characterization of 21,243 full-length human cDNAs.</title>
        <authorList>
            <person name="Ota T."/>
            <person name="Suzuki Y."/>
            <person name="Nishikawa T."/>
            <person name="Otsuki T."/>
            <person name="Sugiyama T."/>
            <person name="Irie R."/>
            <person name="Wakamatsu A."/>
            <person name="Hayashi K."/>
            <person name="Sato H."/>
            <person name="Nagai K."/>
            <person name="Kimura K."/>
            <person name="Makita H."/>
            <person name="Sekine M."/>
            <person name="Obayashi M."/>
            <person name="Nishi T."/>
            <person name="Shibahara T."/>
            <person name="Tanaka T."/>
            <person name="Ishii S."/>
            <person name="Yamamoto J."/>
            <person name="Saito K."/>
            <person name="Kawai Y."/>
            <person name="Isono Y."/>
            <person name="Nakamura Y."/>
            <person name="Nagahari K."/>
            <person name="Murakami K."/>
            <person name="Yasuda T."/>
            <person name="Iwayanagi T."/>
            <person name="Wagatsuma M."/>
            <person name="Shiratori A."/>
            <person name="Sudo H."/>
            <person name="Hosoiri T."/>
            <person name="Kaku Y."/>
            <person name="Kodaira H."/>
            <person name="Kondo H."/>
            <person name="Sugawara M."/>
            <person name="Takahashi M."/>
            <person name="Kanda K."/>
            <person name="Yokoi T."/>
            <person name="Furuya T."/>
            <person name="Kikkawa E."/>
            <person name="Omura Y."/>
            <person name="Abe K."/>
            <person name="Kamihara K."/>
            <person name="Katsuta N."/>
            <person name="Sato K."/>
            <person name="Tanikawa M."/>
            <person name="Yamazaki M."/>
            <person name="Ninomiya K."/>
            <person name="Ishibashi T."/>
            <person name="Yamashita H."/>
            <person name="Murakawa K."/>
            <person name="Fujimori K."/>
            <person name="Tanai H."/>
            <person name="Kimata M."/>
            <person name="Watanabe M."/>
            <person name="Hiraoka S."/>
            <person name="Chiba Y."/>
            <person name="Ishida S."/>
            <person name="Ono Y."/>
            <person name="Takiguchi S."/>
            <person name="Watanabe S."/>
            <person name="Yosida M."/>
            <person name="Hotuta T."/>
            <person name="Kusano J."/>
            <person name="Kanehori K."/>
            <person name="Takahashi-Fujii A."/>
            <person name="Hara H."/>
            <person name="Tanase T.-O."/>
            <person name="Nomura Y."/>
            <person name="Togiya S."/>
            <person name="Komai F."/>
            <person name="Hara R."/>
            <person name="Takeuchi K."/>
            <person name="Arita M."/>
            <person name="Imose N."/>
            <person name="Musashino K."/>
            <person name="Yuuki H."/>
            <person name="Oshima A."/>
            <person name="Sasaki N."/>
            <person name="Aotsuka S."/>
            <person name="Yoshikawa Y."/>
            <person name="Matsunawa H."/>
            <person name="Ichihara T."/>
            <person name="Shiohata N."/>
            <person name="Sano S."/>
            <person name="Moriya S."/>
            <person name="Momiyama H."/>
            <person name="Satoh N."/>
            <person name="Takami S."/>
            <person name="Terashima Y."/>
            <person name="Suzuki O."/>
            <person name="Nakagawa S."/>
            <person name="Senoh A."/>
            <person name="Mizoguchi H."/>
            <person name="Goto Y."/>
            <person name="Shimizu F."/>
            <person name="Wakebe H."/>
            <person name="Hishigaki H."/>
            <person name="Watanabe T."/>
            <person name="Sugiyama A."/>
            <person name="Takemoto M."/>
            <person name="Kawakami B."/>
            <person name="Yamazaki M."/>
            <person name="Watanabe K."/>
            <person name="Kumagai A."/>
            <person name="Itakura S."/>
            <person name="Fukuzumi Y."/>
            <person name="Fujimori Y."/>
            <person name="Komiyama M."/>
            <person name="Tashiro H."/>
            <person name="Tanigami A."/>
            <person name="Fujiwara T."/>
            <person name="Ono T."/>
            <person name="Yamada K."/>
            <person name="Fujii Y."/>
            <person name="Ozaki K."/>
            <person name="Hirao M."/>
            <person name="Ohmori Y."/>
            <person name="Kawabata A."/>
            <person name="Hikiji T."/>
            <person name="Kobatake N."/>
            <person name="Inagaki H."/>
            <person name="Ikema Y."/>
            <person name="Okamoto S."/>
            <person name="Okitani R."/>
            <person name="Kawakami T."/>
            <person name="Noguchi S."/>
            <person name="Itoh T."/>
            <person name="Shigeta K."/>
            <person name="Senba T."/>
            <person name="Matsumura K."/>
            <person name="Nakajima Y."/>
            <person name="Mizuno T."/>
            <person name="Morinaga M."/>
            <person name="Sasaki M."/>
            <person name="Togashi T."/>
            <person name="Oyama M."/>
            <person name="Hata H."/>
            <person name="Watanabe M."/>
            <person name="Komatsu T."/>
            <person name="Mizushima-Sugano J."/>
            <person name="Satoh T."/>
            <person name="Shirai Y."/>
            <person name="Takahashi Y."/>
            <person name="Nakagawa K."/>
            <person name="Okumura K."/>
            <person name="Nagase T."/>
            <person name="Nomura N."/>
            <person name="Kikuchi H."/>
            <person name="Masuho Y."/>
            <person name="Yamashita R."/>
            <person name="Nakai K."/>
            <person name="Yada T."/>
            <person name="Nakamura Y."/>
            <person name="Ohara O."/>
            <person name="Isogai T."/>
            <person name="Sugano S."/>
        </authorList>
    </citation>
    <scope>NUCLEOTIDE SEQUENCE [LARGE SCALE MRNA] (ISOFORMS 1; 2; 3 AND 4)</scope>
    <source>
        <tissue>Brain</tissue>
        <tissue>Placenta</tissue>
        <tissue>Teratocarcinoma</tissue>
        <tissue>Testis</tissue>
        <tissue>Thalamus</tissue>
    </source>
</reference>
<reference key="3">
    <citation type="submission" date="2005-07" db="EMBL/GenBank/DDBJ databases">
        <authorList>
            <person name="Mural R.J."/>
            <person name="Istrail S."/>
            <person name="Sutton G."/>
            <person name="Florea L."/>
            <person name="Halpern A.L."/>
            <person name="Mobarry C.M."/>
            <person name="Lippert R."/>
            <person name="Walenz B."/>
            <person name="Shatkay H."/>
            <person name="Dew I."/>
            <person name="Miller J.R."/>
            <person name="Flanigan M.J."/>
            <person name="Edwards N.J."/>
            <person name="Bolanos R."/>
            <person name="Fasulo D."/>
            <person name="Halldorsson B.V."/>
            <person name="Hannenhalli S."/>
            <person name="Turner R."/>
            <person name="Yooseph S."/>
            <person name="Lu F."/>
            <person name="Nusskern D.R."/>
            <person name="Shue B.C."/>
            <person name="Zheng X.H."/>
            <person name="Zhong F."/>
            <person name="Delcher A.L."/>
            <person name="Huson D.H."/>
            <person name="Kravitz S.A."/>
            <person name="Mouchard L."/>
            <person name="Reinert K."/>
            <person name="Remington K.A."/>
            <person name="Clark A.G."/>
            <person name="Waterman M.S."/>
            <person name="Eichler E.E."/>
            <person name="Adams M.D."/>
            <person name="Hunkapiller M.W."/>
            <person name="Myers E.W."/>
            <person name="Venter J.C."/>
        </authorList>
    </citation>
    <scope>NUCLEOTIDE SEQUENCE [LARGE SCALE GENOMIC DNA]</scope>
</reference>
<reference key="4">
    <citation type="journal article" date="2004" name="Genome Res.">
        <title>The status, quality, and expansion of the NIH full-length cDNA project: the Mammalian Gene Collection (MGC).</title>
        <authorList>
            <consortium name="The MGC Project Team"/>
        </authorList>
    </citation>
    <scope>NUCLEOTIDE SEQUENCE [LARGE SCALE MRNA] (ISOFORM 1)</scope>
    <source>
        <tissue>Uterus</tissue>
    </source>
</reference>
<reference key="5">
    <citation type="journal article" date="2004" name="Biochem. Biophys. Res. Commun.">
        <title>Cloning and enzymatic analysis of 22 novel human ubiquitin-specific proteases.</title>
        <authorList>
            <person name="Quesada V."/>
            <person name="Diaz-Perales A."/>
            <person name="Gutierrez-Fernandez A."/>
            <person name="Garabaya C."/>
            <person name="Cal S."/>
            <person name="Lopez-Otin C."/>
        </authorList>
    </citation>
    <scope>TISSUE SPECIFICITY</scope>
    <scope>ENZYME ACTIVITY</scope>
</reference>
<reference key="6">
    <citation type="journal article" date="2009" name="J. Biol. Chem.">
        <title>UAF1 is a subunit of multiple deubiquitinating enzyme complexes.</title>
        <authorList>
            <person name="Cohn M.A."/>
            <person name="Kee Y."/>
            <person name="Haas W."/>
            <person name="Gygi S.P."/>
            <person name="D'Andrea A.D."/>
        </authorList>
    </citation>
    <scope>IDENTIFICATION BY MASS SPECTROMETRY</scope>
    <scope>CATALYTIC ACTIVITY</scope>
    <scope>FUNCTION</scope>
    <scope>INTERACTION WITH WDR48</scope>
</reference>
<reference key="7">
    <citation type="journal article" date="2010" name="J. Biol. Chem.">
        <title>WDR20 regulates activity of the USP12 x UAF1 deubiquitinating enzyme complex.</title>
        <authorList>
            <person name="Kee Y."/>
            <person name="Yang K."/>
            <person name="Cohn M.A."/>
            <person name="Haas W."/>
            <person name="Gygi S.P."/>
            <person name="D'Andrea A.D."/>
        </authorList>
    </citation>
    <scope>INTERACTION WITH WRD20</scope>
</reference>
<reference key="8">
    <citation type="journal article" date="2019" name="Eur. J. Cell Biol.">
        <title>WDR20 regulates shuttling of the USP12 deubiquitinase complex between the plasma membrane, cytoplasm and nucleus.</title>
        <authorList>
            <person name="Olazabal-Herrero A."/>
            <person name="Sendino M."/>
            <person name="Arganda-Carreras I."/>
            <person name="Rodriguez J.A."/>
        </authorList>
    </citation>
    <scope>SUBCELLULAR LOCATION</scope>
</reference>
<reference key="9">
    <citation type="journal article" date="2021" name="FEBS J.">
        <title>The dystrophia myotonica WD repeat-containing protein DMWD and WDR20 differentially regulate USP12 deubiquitinase.</title>
        <authorList>
            <person name="Olazabal-Herrero A."/>
            <person name="Bilbao-Arribas M."/>
            <person name="Carlevaris O."/>
            <person name="Sendino M."/>
            <person name="Varela-Martinez E."/>
            <person name="Jugo B.M."/>
            <person name="Berra E."/>
            <person name="Rodriguez J.A."/>
        </authorList>
    </citation>
    <scope>INTERACTION WITH DMWD</scope>
</reference>
<reference evidence="14 15 16" key="10">
    <citation type="journal article" date="2015" name="Structure">
        <title>Structural insights into WD-repeat 48 activation of ubiquitin-specific protease 46.</title>
        <authorList>
            <person name="Yin J."/>
            <person name="Schoeffler A.J."/>
            <person name="Wickliffe K."/>
            <person name="Newton K."/>
            <person name="Starovasnik M.A."/>
            <person name="Dueber E.C."/>
            <person name="Harris S.F."/>
        </authorList>
    </citation>
    <scope>X-RAY CRYSTALLOGRAPHY (1.90 ANGSTROMS) OF 25-366 IN COMPLEXES WITH WDR48 AND UBIQUITIN</scope>
    <scope>ZINC-BINDING</scope>
    <scope>INTERACTION WITH WDR48</scope>
    <scope>FUNCTION</scope>
    <scope>ACTIVITY REGULATION</scope>
    <scope>ACTIVE SITE</scope>
    <scope>CATALYTIC ACTIVITY</scope>
    <scope>MUTAGENESIS OF CYS-44</scope>
</reference>
<reference evidence="17" key="11">
    <citation type="journal article" date="2016" name="J. Struct. Biol.">
        <title>A conserved two-step binding for the UAF1 regulator to the USP12 deubiquitinating enzyme.</title>
        <authorList>
            <person name="Dharadhar S."/>
            <person name="Clerici M."/>
            <person name="van Dijk W.J."/>
            <person name="Fish A."/>
            <person name="Sixma T.K."/>
        </authorList>
    </citation>
    <scope>X-RAY CRYSTALLOGRAPHY (1.85 ANGSTROMS) OF 8-366 IN COMPLEX WITH UBIQUITIN</scope>
    <scope>ZINC-BINDING</scope>
</reference>
<dbReference type="EC" id="3.4.19.12" evidence="4 5 8"/>
<dbReference type="EMBL" id="GU455414">
    <property type="protein sequence ID" value="ADV57651.1"/>
    <property type="molecule type" value="mRNA"/>
</dbReference>
<dbReference type="EMBL" id="AK022614">
    <property type="protein sequence ID" value="BAB14133.1"/>
    <property type="molecule type" value="mRNA"/>
</dbReference>
<dbReference type="EMBL" id="AK024318">
    <property type="protein sequence ID" value="BAB14881.1"/>
    <property type="molecule type" value="mRNA"/>
</dbReference>
<dbReference type="EMBL" id="AK296493">
    <property type="protein sequence ID" value="BAH12373.1"/>
    <property type="molecule type" value="mRNA"/>
</dbReference>
<dbReference type="EMBL" id="AK299883">
    <property type="protein sequence ID" value="BAH13161.1"/>
    <property type="molecule type" value="mRNA"/>
</dbReference>
<dbReference type="EMBL" id="AK302438">
    <property type="protein sequence ID" value="BAH13709.1"/>
    <property type="molecule type" value="mRNA"/>
</dbReference>
<dbReference type="EMBL" id="CH471057">
    <property type="protein sequence ID" value="EAX05435.1"/>
    <property type="molecule type" value="Genomic_DNA"/>
</dbReference>
<dbReference type="EMBL" id="BC037574">
    <property type="protein sequence ID" value="AAH37574.1"/>
    <property type="molecule type" value="mRNA"/>
</dbReference>
<dbReference type="CCDS" id="CCDS47053.1">
    <molecule id="P62068-1"/>
</dbReference>
<dbReference type="CCDS" id="CCDS47054.1">
    <molecule id="P62068-3"/>
</dbReference>
<dbReference type="RefSeq" id="NP_001127695.1">
    <molecule id="P62068-3"/>
    <property type="nucleotide sequence ID" value="NM_001134223.2"/>
</dbReference>
<dbReference type="RefSeq" id="NP_001273696.1">
    <molecule id="P62068-4"/>
    <property type="nucleotide sequence ID" value="NM_001286767.2"/>
</dbReference>
<dbReference type="RefSeq" id="NP_001273697.1">
    <molecule id="P62068-2"/>
    <property type="nucleotide sequence ID" value="NM_001286768.2"/>
</dbReference>
<dbReference type="RefSeq" id="NP_073743.2">
    <molecule id="P62068-1"/>
    <property type="nucleotide sequence ID" value="NM_022832.3"/>
</dbReference>
<dbReference type="PDB" id="5CVM">
    <property type="method" value="X-ray"/>
    <property type="resolution" value="1.90 A"/>
    <property type="chains" value="A=25-366"/>
</dbReference>
<dbReference type="PDB" id="5CVN">
    <property type="method" value="X-ray"/>
    <property type="resolution" value="3.36 A"/>
    <property type="chains" value="B=25-366"/>
</dbReference>
<dbReference type="PDB" id="5CVO">
    <property type="method" value="X-ray"/>
    <property type="resolution" value="3.88 A"/>
    <property type="chains" value="B/E=25-366"/>
</dbReference>
<dbReference type="PDB" id="5L8H">
    <property type="method" value="X-ray"/>
    <property type="resolution" value="1.85 A"/>
    <property type="chains" value="A=8-366"/>
</dbReference>
<dbReference type="PDB" id="6JLQ">
    <property type="method" value="X-ray"/>
    <property type="resolution" value="3.10 A"/>
    <property type="chains" value="A=23-366"/>
</dbReference>
<dbReference type="PDBsum" id="5CVM"/>
<dbReference type="PDBsum" id="5CVN"/>
<dbReference type="PDBsum" id="5CVO"/>
<dbReference type="PDBsum" id="5L8H"/>
<dbReference type="PDBsum" id="6JLQ"/>
<dbReference type="SMR" id="P62068"/>
<dbReference type="BioGRID" id="122327">
    <property type="interactions" value="65"/>
</dbReference>
<dbReference type="ComplexPortal" id="CPX-9281">
    <property type="entry name" value="USP46 deubiquitinase complex"/>
</dbReference>
<dbReference type="CORUM" id="P62068"/>
<dbReference type="DIP" id="DIP-53590N"/>
<dbReference type="FunCoup" id="P62068">
    <property type="interactions" value="3126"/>
</dbReference>
<dbReference type="IntAct" id="P62068">
    <property type="interactions" value="45"/>
</dbReference>
<dbReference type="MINT" id="P62068"/>
<dbReference type="STRING" id="9606.ENSP00000407818"/>
<dbReference type="ChEMBL" id="CHEMBL5291970"/>
<dbReference type="MEROPS" id="C19.052"/>
<dbReference type="GlyGen" id="P62068">
    <property type="glycosylation" value="1 site, 1 O-linked glycan (1 site)"/>
</dbReference>
<dbReference type="iPTMnet" id="P62068"/>
<dbReference type="PhosphoSitePlus" id="P62068"/>
<dbReference type="SwissPalm" id="P62068"/>
<dbReference type="BioMuta" id="USP46"/>
<dbReference type="DMDM" id="49065850"/>
<dbReference type="jPOST" id="P62068"/>
<dbReference type="MassIVE" id="P62068"/>
<dbReference type="PaxDb" id="9606-ENSP00000407818"/>
<dbReference type="PeptideAtlas" id="P62068"/>
<dbReference type="ProteomicsDB" id="57356">
    <molecule id="P62068-1"/>
</dbReference>
<dbReference type="ProteomicsDB" id="57357">
    <molecule id="P62068-2"/>
</dbReference>
<dbReference type="ProteomicsDB" id="57358">
    <molecule id="P62068-3"/>
</dbReference>
<dbReference type="ProteomicsDB" id="57359">
    <molecule id="P62068-4"/>
</dbReference>
<dbReference type="Pumba" id="P62068"/>
<dbReference type="Antibodypedia" id="1722">
    <property type="antibodies" value="132 antibodies from 26 providers"/>
</dbReference>
<dbReference type="DNASU" id="64854"/>
<dbReference type="Ensembl" id="ENST00000441222.8">
    <molecule id="P62068-1"/>
    <property type="protein sequence ID" value="ENSP00000407818.2"/>
    <property type="gene ID" value="ENSG00000109189.13"/>
</dbReference>
<dbReference type="Ensembl" id="ENST00000508499.5">
    <molecule id="P62068-3"/>
    <property type="protein sequence ID" value="ENSP00000423244.1"/>
    <property type="gene ID" value="ENSG00000109189.13"/>
</dbReference>
<dbReference type="GeneID" id="64854"/>
<dbReference type="KEGG" id="hsa:64854"/>
<dbReference type="MANE-Select" id="ENST00000441222.8">
    <property type="protein sequence ID" value="ENSP00000407818.2"/>
    <property type="RefSeq nucleotide sequence ID" value="NM_022832.4"/>
    <property type="RefSeq protein sequence ID" value="NP_073743.2"/>
</dbReference>
<dbReference type="UCSC" id="uc003gzm.5">
    <molecule id="P62068-1"/>
    <property type="organism name" value="human"/>
</dbReference>
<dbReference type="AGR" id="HGNC:20075"/>
<dbReference type="CTD" id="64854"/>
<dbReference type="DisGeNET" id="64854"/>
<dbReference type="GeneCards" id="USP46"/>
<dbReference type="HGNC" id="HGNC:20075">
    <property type="gene designation" value="USP46"/>
</dbReference>
<dbReference type="HPA" id="ENSG00000109189">
    <property type="expression patterns" value="Low tissue specificity"/>
</dbReference>
<dbReference type="MIM" id="612849">
    <property type="type" value="gene"/>
</dbReference>
<dbReference type="neXtProt" id="NX_P62068"/>
<dbReference type="OpenTargets" id="ENSG00000109189"/>
<dbReference type="PharmGKB" id="PA134922048"/>
<dbReference type="VEuPathDB" id="HostDB:ENSG00000109189"/>
<dbReference type="eggNOG" id="KOG1864">
    <property type="taxonomic scope" value="Eukaryota"/>
</dbReference>
<dbReference type="GeneTree" id="ENSGT00940000153284"/>
<dbReference type="InParanoid" id="P62068"/>
<dbReference type="OMA" id="ANFGNTC"/>
<dbReference type="OrthoDB" id="27652at2759"/>
<dbReference type="PAN-GO" id="P62068">
    <property type="GO annotations" value="5 GO annotations based on evolutionary models"/>
</dbReference>
<dbReference type="PhylomeDB" id="P62068"/>
<dbReference type="TreeFam" id="TF314144"/>
<dbReference type="PathwayCommons" id="P62068"/>
<dbReference type="SignaLink" id="P62068"/>
<dbReference type="BioGRID-ORCS" id="64854">
    <property type="hits" value="29 hits in 1203 CRISPR screens"/>
</dbReference>
<dbReference type="ChiTaRS" id="USP46">
    <property type="organism name" value="human"/>
</dbReference>
<dbReference type="GenomeRNAi" id="64854"/>
<dbReference type="Pharos" id="P62068">
    <property type="development level" value="Tbio"/>
</dbReference>
<dbReference type="PRO" id="PR:P62068"/>
<dbReference type="Proteomes" id="UP000005640">
    <property type="component" value="Chromosome 4"/>
</dbReference>
<dbReference type="RNAct" id="P62068">
    <property type="molecule type" value="protein"/>
</dbReference>
<dbReference type="Bgee" id="ENSG00000109189">
    <property type="expression patterns" value="Expressed in choroid plexus epithelium and 205 other cell types or tissues"/>
</dbReference>
<dbReference type="ExpressionAtlas" id="P62068">
    <property type="expression patterns" value="baseline and differential"/>
</dbReference>
<dbReference type="GO" id="GO:0005737">
    <property type="term" value="C:cytoplasm"/>
    <property type="evidence" value="ECO:0000314"/>
    <property type="project" value="UniProtKB"/>
</dbReference>
<dbReference type="GO" id="GO:0005829">
    <property type="term" value="C:cytosol"/>
    <property type="evidence" value="ECO:0000318"/>
    <property type="project" value="GO_Central"/>
</dbReference>
<dbReference type="GO" id="GO:0098978">
    <property type="term" value="C:glutamatergic synapse"/>
    <property type="evidence" value="ECO:0007669"/>
    <property type="project" value="Ensembl"/>
</dbReference>
<dbReference type="GO" id="GO:0005634">
    <property type="term" value="C:nucleus"/>
    <property type="evidence" value="ECO:0000318"/>
    <property type="project" value="GO_Central"/>
</dbReference>
<dbReference type="GO" id="GO:0004843">
    <property type="term" value="F:cysteine-type deubiquitinase activity"/>
    <property type="evidence" value="ECO:0000314"/>
    <property type="project" value="UniProtKB"/>
</dbReference>
<dbReference type="GO" id="GO:0046872">
    <property type="term" value="F:metal ion binding"/>
    <property type="evidence" value="ECO:0007669"/>
    <property type="project" value="UniProtKB-KW"/>
</dbReference>
<dbReference type="GO" id="GO:0008343">
    <property type="term" value="P:adult feeding behavior"/>
    <property type="evidence" value="ECO:0007669"/>
    <property type="project" value="Ensembl"/>
</dbReference>
<dbReference type="GO" id="GO:0001662">
    <property type="term" value="P:behavioral fear response"/>
    <property type="evidence" value="ECO:0007669"/>
    <property type="project" value="Ensembl"/>
</dbReference>
<dbReference type="GO" id="GO:0048149">
    <property type="term" value="P:behavioral response to ethanol"/>
    <property type="evidence" value="ECO:0007669"/>
    <property type="project" value="Ensembl"/>
</dbReference>
<dbReference type="GO" id="GO:0016579">
    <property type="term" value="P:protein deubiquitination"/>
    <property type="evidence" value="ECO:0000314"/>
    <property type="project" value="UniProtKB"/>
</dbReference>
<dbReference type="GO" id="GO:0006508">
    <property type="term" value="P:proteolysis"/>
    <property type="evidence" value="ECO:0007669"/>
    <property type="project" value="UniProtKB-KW"/>
</dbReference>
<dbReference type="GO" id="GO:0099149">
    <property type="term" value="P:regulation of postsynaptic neurotransmitter receptor internalization"/>
    <property type="evidence" value="ECO:0007669"/>
    <property type="project" value="Ensembl"/>
</dbReference>
<dbReference type="GO" id="GO:0031647">
    <property type="term" value="P:regulation of protein stability"/>
    <property type="evidence" value="ECO:0000318"/>
    <property type="project" value="GO_Central"/>
</dbReference>
<dbReference type="GO" id="GO:0032228">
    <property type="term" value="P:regulation of synaptic transmission, GABAergic"/>
    <property type="evidence" value="ECO:0000250"/>
    <property type="project" value="UniProtKB"/>
</dbReference>
<dbReference type="GO" id="GO:0060013">
    <property type="term" value="P:righting reflex"/>
    <property type="evidence" value="ECO:0007669"/>
    <property type="project" value="Ensembl"/>
</dbReference>
<dbReference type="CDD" id="cd02663">
    <property type="entry name" value="Peptidase_C19G"/>
    <property type="match status" value="1"/>
</dbReference>
<dbReference type="FunFam" id="3.90.70.10:FF:000003">
    <property type="entry name" value="Ubiquitin carboxyl-terminal hydrolase 46"/>
    <property type="match status" value="1"/>
</dbReference>
<dbReference type="Gene3D" id="3.90.70.10">
    <property type="entry name" value="Cysteine proteinases"/>
    <property type="match status" value="1"/>
</dbReference>
<dbReference type="InterPro" id="IPR038765">
    <property type="entry name" value="Papain-like_cys_pep_sf"/>
</dbReference>
<dbReference type="InterPro" id="IPR050164">
    <property type="entry name" value="Peptidase_C19"/>
</dbReference>
<dbReference type="InterPro" id="IPR001394">
    <property type="entry name" value="Peptidase_C19_UCH"/>
</dbReference>
<dbReference type="InterPro" id="IPR018200">
    <property type="entry name" value="USP_CS"/>
</dbReference>
<dbReference type="InterPro" id="IPR028889">
    <property type="entry name" value="USP_dom"/>
</dbReference>
<dbReference type="PANTHER" id="PTHR24006">
    <property type="entry name" value="UBIQUITIN CARBOXYL-TERMINAL HYDROLASE"/>
    <property type="match status" value="1"/>
</dbReference>
<dbReference type="PANTHER" id="PTHR24006:SF714">
    <property type="entry name" value="UBIQUITIN CARBOXYL-TERMINAL HYDROLASE 46"/>
    <property type="match status" value="1"/>
</dbReference>
<dbReference type="Pfam" id="PF00443">
    <property type="entry name" value="UCH"/>
    <property type="match status" value="1"/>
</dbReference>
<dbReference type="SUPFAM" id="SSF54001">
    <property type="entry name" value="Cysteine proteinases"/>
    <property type="match status" value="1"/>
</dbReference>
<dbReference type="PROSITE" id="PS00972">
    <property type="entry name" value="USP_1"/>
    <property type="match status" value="1"/>
</dbReference>
<dbReference type="PROSITE" id="PS00973">
    <property type="entry name" value="USP_2"/>
    <property type="match status" value="1"/>
</dbReference>
<dbReference type="PROSITE" id="PS50235">
    <property type="entry name" value="USP_3"/>
    <property type="match status" value="1"/>
</dbReference>